<feature type="chain" id="PRO_1000149660" description="tRNA (guanine-N(7)-)-methyltransferase">
    <location>
        <begin position="1"/>
        <end position="238"/>
    </location>
</feature>
<feature type="active site" evidence="1">
    <location>
        <position position="143"/>
    </location>
</feature>
<feature type="binding site" evidence="2">
    <location>
        <position position="68"/>
    </location>
    <ligand>
        <name>S-adenosyl-L-methionine</name>
        <dbReference type="ChEBI" id="CHEBI:59789"/>
    </ligand>
</feature>
<feature type="binding site" evidence="2">
    <location>
        <position position="93"/>
    </location>
    <ligand>
        <name>S-adenosyl-L-methionine</name>
        <dbReference type="ChEBI" id="CHEBI:59789"/>
    </ligand>
</feature>
<feature type="binding site" evidence="2">
    <location>
        <position position="120"/>
    </location>
    <ligand>
        <name>S-adenosyl-L-methionine</name>
        <dbReference type="ChEBI" id="CHEBI:59789"/>
    </ligand>
</feature>
<feature type="binding site" evidence="2">
    <location>
        <position position="143"/>
    </location>
    <ligand>
        <name>S-adenosyl-L-methionine</name>
        <dbReference type="ChEBI" id="CHEBI:59789"/>
    </ligand>
</feature>
<feature type="binding site" evidence="2">
    <location>
        <position position="147"/>
    </location>
    <ligand>
        <name>substrate</name>
    </ligand>
</feature>
<feature type="binding site" evidence="2">
    <location>
        <position position="179"/>
    </location>
    <ligand>
        <name>substrate</name>
    </ligand>
</feature>
<feature type="binding site" evidence="2">
    <location>
        <begin position="216"/>
        <end position="219"/>
    </location>
    <ligand>
        <name>substrate</name>
    </ligand>
</feature>
<dbReference type="EC" id="2.1.1.33" evidence="2"/>
<dbReference type="EMBL" id="CP001252">
    <property type="protein sequence ID" value="ACK45834.1"/>
    <property type="molecule type" value="Genomic_DNA"/>
</dbReference>
<dbReference type="RefSeq" id="WP_012587161.1">
    <property type="nucleotide sequence ID" value="NC_011663.1"/>
</dbReference>
<dbReference type="SMR" id="B8E918"/>
<dbReference type="KEGG" id="sbp:Sbal223_1326"/>
<dbReference type="HOGENOM" id="CLU_050910_0_1_6"/>
<dbReference type="UniPathway" id="UPA00989"/>
<dbReference type="Proteomes" id="UP000002507">
    <property type="component" value="Chromosome"/>
</dbReference>
<dbReference type="GO" id="GO:0043527">
    <property type="term" value="C:tRNA methyltransferase complex"/>
    <property type="evidence" value="ECO:0007669"/>
    <property type="project" value="TreeGrafter"/>
</dbReference>
<dbReference type="GO" id="GO:0008176">
    <property type="term" value="F:tRNA (guanine(46)-N7)-methyltransferase activity"/>
    <property type="evidence" value="ECO:0007669"/>
    <property type="project" value="UniProtKB-UniRule"/>
</dbReference>
<dbReference type="CDD" id="cd02440">
    <property type="entry name" value="AdoMet_MTases"/>
    <property type="match status" value="1"/>
</dbReference>
<dbReference type="FunFam" id="3.40.50.150:FF:000024">
    <property type="entry name" value="tRNA (guanine-N(7)-)-methyltransferase"/>
    <property type="match status" value="1"/>
</dbReference>
<dbReference type="Gene3D" id="3.40.50.150">
    <property type="entry name" value="Vaccinia Virus protein VP39"/>
    <property type="match status" value="1"/>
</dbReference>
<dbReference type="HAMAP" id="MF_01057">
    <property type="entry name" value="tRNA_methyltr_TrmB"/>
    <property type="match status" value="1"/>
</dbReference>
<dbReference type="InterPro" id="IPR029063">
    <property type="entry name" value="SAM-dependent_MTases_sf"/>
</dbReference>
<dbReference type="InterPro" id="IPR003358">
    <property type="entry name" value="tRNA_(Gua-N-7)_MeTrfase_Trmb"/>
</dbReference>
<dbReference type="InterPro" id="IPR055361">
    <property type="entry name" value="tRNA_methyltr_TrmB_bact"/>
</dbReference>
<dbReference type="NCBIfam" id="TIGR00091">
    <property type="entry name" value="tRNA (guanosine(46)-N7)-methyltransferase TrmB"/>
    <property type="match status" value="1"/>
</dbReference>
<dbReference type="PANTHER" id="PTHR23417">
    <property type="entry name" value="3-DEOXY-D-MANNO-OCTULOSONIC-ACID TRANSFERASE/TRNA GUANINE-N 7 - -METHYLTRANSFERASE"/>
    <property type="match status" value="1"/>
</dbReference>
<dbReference type="PANTHER" id="PTHR23417:SF14">
    <property type="entry name" value="PENTACOTRIPEPTIDE-REPEAT REGION OF PRORP DOMAIN-CONTAINING PROTEIN"/>
    <property type="match status" value="1"/>
</dbReference>
<dbReference type="Pfam" id="PF02390">
    <property type="entry name" value="Methyltransf_4"/>
    <property type="match status" value="1"/>
</dbReference>
<dbReference type="SUPFAM" id="SSF53335">
    <property type="entry name" value="S-adenosyl-L-methionine-dependent methyltransferases"/>
    <property type="match status" value="1"/>
</dbReference>
<dbReference type="PROSITE" id="PS51625">
    <property type="entry name" value="SAM_MT_TRMB"/>
    <property type="match status" value="1"/>
</dbReference>
<accession>B8E918</accession>
<organism>
    <name type="scientific">Shewanella baltica (strain OS223)</name>
    <dbReference type="NCBI Taxonomy" id="407976"/>
    <lineage>
        <taxon>Bacteria</taxon>
        <taxon>Pseudomonadati</taxon>
        <taxon>Pseudomonadota</taxon>
        <taxon>Gammaproteobacteria</taxon>
        <taxon>Alteromonadales</taxon>
        <taxon>Shewanellaceae</taxon>
        <taxon>Shewanella</taxon>
    </lineage>
</organism>
<comment type="function">
    <text evidence="2">Catalyzes the formation of N(7)-methylguanine at position 46 (m7G46) in tRNA.</text>
</comment>
<comment type="catalytic activity">
    <reaction evidence="2">
        <text>guanosine(46) in tRNA + S-adenosyl-L-methionine = N(7)-methylguanosine(46) in tRNA + S-adenosyl-L-homocysteine</text>
        <dbReference type="Rhea" id="RHEA:42708"/>
        <dbReference type="Rhea" id="RHEA-COMP:10188"/>
        <dbReference type="Rhea" id="RHEA-COMP:10189"/>
        <dbReference type="ChEBI" id="CHEBI:57856"/>
        <dbReference type="ChEBI" id="CHEBI:59789"/>
        <dbReference type="ChEBI" id="CHEBI:74269"/>
        <dbReference type="ChEBI" id="CHEBI:74480"/>
        <dbReference type="EC" id="2.1.1.33"/>
    </reaction>
</comment>
<comment type="pathway">
    <text evidence="2">tRNA modification; N(7)-methylguanine-tRNA biosynthesis.</text>
</comment>
<comment type="similarity">
    <text evidence="2">Belongs to the class I-like SAM-binding methyltransferase superfamily. TrmB family.</text>
</comment>
<gene>
    <name evidence="2" type="primary">trmB</name>
    <name type="ordered locus">Sbal223_1326</name>
</gene>
<evidence type="ECO:0000250" key="1"/>
<evidence type="ECO:0000255" key="2">
    <source>
        <dbReference type="HAMAP-Rule" id="MF_01057"/>
    </source>
</evidence>
<sequence>MSEVTTAEFNEEGKYLRKIRSFVLREGRLTKGQAQAIESQWPTMGLDYSPTPLVLSDVFGREADTVLEIGFGMGASLVQMAKDAPEQNFIGIEVHKPGVGSCLSDAAIAGVTNLRVYHHDAMEVLEHAIADGSLARVQLFFPDPWHKKRHHKRRIVQAEFAELIRRKLKIGGVFHMATDWEEYSEHMLEVMQAAPGYKNQSSDGTVVPRPDHRPLTKFEARGHRLGHGVWDLMFERIA</sequence>
<name>TRMB_SHEB2</name>
<proteinExistence type="inferred from homology"/>
<keyword id="KW-0489">Methyltransferase</keyword>
<keyword id="KW-0949">S-adenosyl-L-methionine</keyword>
<keyword id="KW-0808">Transferase</keyword>
<keyword id="KW-0819">tRNA processing</keyword>
<reference key="1">
    <citation type="submission" date="2008-12" db="EMBL/GenBank/DDBJ databases">
        <title>Complete sequence of chromosome of Shewanella baltica OS223.</title>
        <authorList>
            <consortium name="US DOE Joint Genome Institute"/>
            <person name="Lucas S."/>
            <person name="Copeland A."/>
            <person name="Lapidus A."/>
            <person name="Glavina del Rio T."/>
            <person name="Dalin E."/>
            <person name="Tice H."/>
            <person name="Bruce D."/>
            <person name="Goodwin L."/>
            <person name="Pitluck S."/>
            <person name="Chertkov O."/>
            <person name="Meincke L."/>
            <person name="Brettin T."/>
            <person name="Detter J.C."/>
            <person name="Han C."/>
            <person name="Kuske C.R."/>
            <person name="Larimer F."/>
            <person name="Land M."/>
            <person name="Hauser L."/>
            <person name="Kyrpides N."/>
            <person name="Ovchinnikova G."/>
            <person name="Brettar I."/>
            <person name="Rodrigues J."/>
            <person name="Konstantinidis K."/>
            <person name="Tiedje J."/>
        </authorList>
    </citation>
    <scope>NUCLEOTIDE SEQUENCE [LARGE SCALE GENOMIC DNA]</scope>
    <source>
        <strain>OS223</strain>
    </source>
</reference>
<protein>
    <recommendedName>
        <fullName evidence="2">tRNA (guanine-N(7)-)-methyltransferase</fullName>
        <ecNumber evidence="2">2.1.1.33</ecNumber>
    </recommendedName>
    <alternativeName>
        <fullName evidence="2">tRNA (guanine(46)-N(7))-methyltransferase</fullName>
    </alternativeName>
    <alternativeName>
        <fullName evidence="2">tRNA(m7G46)-methyltransferase</fullName>
    </alternativeName>
</protein>